<protein>
    <recommendedName>
        <fullName evidence="1">Large ribosomal subunit protein bL25</fullName>
    </recommendedName>
    <alternativeName>
        <fullName evidence="2">50S ribosomal protein L25</fullName>
    </alternativeName>
    <alternativeName>
        <fullName evidence="1">General stress protein CTC</fullName>
    </alternativeName>
</protein>
<sequence>MSETYVLKADLRTRVGKGSSRELRRNGQIPAVIYGDKQEPLAIAVSYKEIFYKIHGGGFKTTVATIEVDGKKIQVLPKDYQLDPVRDFPQHVDFLRVSAKSVVHVNVPVHFKNEEAAPGIKRGGVLNVVRHDVELIVPANAIPEALEIDLSGLEIGDSVHISAVKLPKGATPAIQDRDFTIATIAAPAGLKSEENAEGTAEEAKDGE</sequence>
<accession>A9M6K0</accession>
<name>RL25_BRUC2</name>
<evidence type="ECO:0000255" key="1">
    <source>
        <dbReference type="HAMAP-Rule" id="MF_01334"/>
    </source>
</evidence>
<evidence type="ECO:0000305" key="2"/>
<organism>
    <name type="scientific">Brucella canis (strain ATCC 23365 / NCTC 10854 / RM-666)</name>
    <dbReference type="NCBI Taxonomy" id="483179"/>
    <lineage>
        <taxon>Bacteria</taxon>
        <taxon>Pseudomonadati</taxon>
        <taxon>Pseudomonadota</taxon>
        <taxon>Alphaproteobacteria</taxon>
        <taxon>Hyphomicrobiales</taxon>
        <taxon>Brucellaceae</taxon>
        <taxon>Brucella/Ochrobactrum group</taxon>
        <taxon>Brucella</taxon>
    </lineage>
</organism>
<gene>
    <name evidence="1" type="primary">rplY</name>
    <name evidence="1" type="synonym">ctc</name>
    <name type="ordered locus">BCAN_A1572</name>
</gene>
<comment type="function">
    <text evidence="1">This is one of the proteins that binds to the 5S RNA in the ribosome where it forms part of the central protuberance.</text>
</comment>
<comment type="subunit">
    <text evidence="1">Part of the 50S ribosomal subunit; part of the 5S rRNA/L5/L18/L25 subcomplex. Contacts the 5S rRNA. Binds to the 5S rRNA independently of L5 and L18.</text>
</comment>
<comment type="similarity">
    <text evidence="1">Belongs to the bacterial ribosomal protein bL25 family. CTC subfamily.</text>
</comment>
<proteinExistence type="inferred from homology"/>
<feature type="chain" id="PRO_1000086618" description="Large ribosomal subunit protein bL25">
    <location>
        <begin position="1"/>
        <end position="207"/>
    </location>
</feature>
<reference key="1">
    <citation type="submission" date="2007-10" db="EMBL/GenBank/DDBJ databases">
        <title>Brucella canis ATCC 23365 whole genome shotgun sequencing project.</title>
        <authorList>
            <person name="Setubal J.C."/>
            <person name="Bowns C."/>
            <person name="Boyle S."/>
            <person name="Crasta O.R."/>
            <person name="Czar M.J."/>
            <person name="Dharmanolla C."/>
            <person name="Gillespie J.J."/>
            <person name="Kenyon R.W."/>
            <person name="Lu J."/>
            <person name="Mane S."/>
            <person name="Mohapatra S."/>
            <person name="Nagrani S."/>
            <person name="Purkayastha A."/>
            <person name="Rajasimha H.K."/>
            <person name="Shallom J.M."/>
            <person name="Shallom S."/>
            <person name="Shukla M."/>
            <person name="Snyder E.E."/>
            <person name="Sobral B.W."/>
            <person name="Wattam A.R."/>
            <person name="Will R."/>
            <person name="Williams K."/>
            <person name="Yoo H."/>
            <person name="Bruce D."/>
            <person name="Detter C."/>
            <person name="Munk C."/>
            <person name="Brettin T.S."/>
        </authorList>
    </citation>
    <scope>NUCLEOTIDE SEQUENCE [LARGE SCALE GENOMIC DNA]</scope>
    <source>
        <strain>ATCC 23365 / NCTC 10854 / RM-666</strain>
    </source>
</reference>
<keyword id="KW-1185">Reference proteome</keyword>
<keyword id="KW-0687">Ribonucleoprotein</keyword>
<keyword id="KW-0689">Ribosomal protein</keyword>
<keyword id="KW-0694">RNA-binding</keyword>
<keyword id="KW-0699">rRNA-binding</keyword>
<dbReference type="EMBL" id="CP000872">
    <property type="protein sequence ID" value="ABX62596.1"/>
    <property type="molecule type" value="Genomic_DNA"/>
</dbReference>
<dbReference type="RefSeq" id="WP_004691025.1">
    <property type="nucleotide sequence ID" value="NC_010103.1"/>
</dbReference>
<dbReference type="SMR" id="A9M6K0"/>
<dbReference type="GeneID" id="55591175"/>
<dbReference type="KEGG" id="bcs:BCAN_A1572"/>
<dbReference type="HOGENOM" id="CLU_075939_0_0_5"/>
<dbReference type="PhylomeDB" id="A9M6K0"/>
<dbReference type="Proteomes" id="UP000001385">
    <property type="component" value="Chromosome I"/>
</dbReference>
<dbReference type="GO" id="GO:0022625">
    <property type="term" value="C:cytosolic large ribosomal subunit"/>
    <property type="evidence" value="ECO:0007669"/>
    <property type="project" value="TreeGrafter"/>
</dbReference>
<dbReference type="GO" id="GO:0008097">
    <property type="term" value="F:5S rRNA binding"/>
    <property type="evidence" value="ECO:0007669"/>
    <property type="project" value="InterPro"/>
</dbReference>
<dbReference type="GO" id="GO:0003735">
    <property type="term" value="F:structural constituent of ribosome"/>
    <property type="evidence" value="ECO:0007669"/>
    <property type="project" value="InterPro"/>
</dbReference>
<dbReference type="GO" id="GO:0006412">
    <property type="term" value="P:translation"/>
    <property type="evidence" value="ECO:0007669"/>
    <property type="project" value="UniProtKB-UniRule"/>
</dbReference>
<dbReference type="CDD" id="cd00495">
    <property type="entry name" value="Ribosomal_L25_TL5_CTC"/>
    <property type="match status" value="1"/>
</dbReference>
<dbReference type="Gene3D" id="2.170.120.20">
    <property type="entry name" value="Ribosomal protein L25, beta domain"/>
    <property type="match status" value="1"/>
</dbReference>
<dbReference type="Gene3D" id="2.40.240.10">
    <property type="entry name" value="Ribosomal Protein L25, Chain P"/>
    <property type="match status" value="1"/>
</dbReference>
<dbReference type="HAMAP" id="MF_01334">
    <property type="entry name" value="Ribosomal_bL25_CTC"/>
    <property type="match status" value="1"/>
</dbReference>
<dbReference type="InterPro" id="IPR020056">
    <property type="entry name" value="Rbsml_bL25/Gln-tRNA_synth_N"/>
</dbReference>
<dbReference type="InterPro" id="IPR011035">
    <property type="entry name" value="Ribosomal_bL25/Gln-tRNA_synth"/>
</dbReference>
<dbReference type="InterPro" id="IPR020057">
    <property type="entry name" value="Ribosomal_bL25_b-dom"/>
</dbReference>
<dbReference type="InterPro" id="IPR037121">
    <property type="entry name" value="Ribosomal_bL25_C"/>
</dbReference>
<dbReference type="InterPro" id="IPR001021">
    <property type="entry name" value="Ribosomal_bL25_long"/>
</dbReference>
<dbReference type="InterPro" id="IPR029751">
    <property type="entry name" value="Ribosomal_L25_dom"/>
</dbReference>
<dbReference type="InterPro" id="IPR020930">
    <property type="entry name" value="Ribosomal_uL5_bac-type"/>
</dbReference>
<dbReference type="NCBIfam" id="TIGR00731">
    <property type="entry name" value="bL25_bact_ctc"/>
    <property type="match status" value="1"/>
</dbReference>
<dbReference type="NCBIfam" id="NF004128">
    <property type="entry name" value="PRK05618.1-2"/>
    <property type="match status" value="1"/>
</dbReference>
<dbReference type="NCBIfam" id="NF004612">
    <property type="entry name" value="PRK05943.1"/>
    <property type="match status" value="1"/>
</dbReference>
<dbReference type="PANTHER" id="PTHR33284">
    <property type="entry name" value="RIBOSOMAL PROTEIN L25/GLN-TRNA SYNTHETASE, ANTI-CODON-BINDING DOMAIN-CONTAINING PROTEIN"/>
    <property type="match status" value="1"/>
</dbReference>
<dbReference type="PANTHER" id="PTHR33284:SF1">
    <property type="entry name" value="RIBOSOMAL PROTEIN L25_GLN-TRNA SYNTHETASE, ANTI-CODON-BINDING DOMAIN-CONTAINING PROTEIN"/>
    <property type="match status" value="1"/>
</dbReference>
<dbReference type="Pfam" id="PF01386">
    <property type="entry name" value="Ribosomal_L25p"/>
    <property type="match status" value="1"/>
</dbReference>
<dbReference type="Pfam" id="PF14693">
    <property type="entry name" value="Ribosomal_TL5_C"/>
    <property type="match status" value="1"/>
</dbReference>
<dbReference type="SUPFAM" id="SSF50715">
    <property type="entry name" value="Ribosomal protein L25-like"/>
    <property type="match status" value="1"/>
</dbReference>